<proteinExistence type="inferred from homology"/>
<organism>
    <name type="scientific">Syntrophotalea carbinolica (strain DSM 2380 / NBRC 103641 / GraBd1)</name>
    <name type="common">Pelobacter carbinolicus</name>
    <dbReference type="NCBI Taxonomy" id="338963"/>
    <lineage>
        <taxon>Bacteria</taxon>
        <taxon>Pseudomonadati</taxon>
        <taxon>Thermodesulfobacteriota</taxon>
        <taxon>Desulfuromonadia</taxon>
        <taxon>Desulfuromonadales</taxon>
        <taxon>Syntrophotaleaceae</taxon>
        <taxon>Syntrophotalea</taxon>
    </lineage>
</organism>
<reference key="1">
    <citation type="submission" date="2005-10" db="EMBL/GenBank/DDBJ databases">
        <title>Complete sequence of Pelobacter carbinolicus DSM 2380.</title>
        <authorList>
            <person name="Copeland A."/>
            <person name="Lucas S."/>
            <person name="Lapidus A."/>
            <person name="Barry K."/>
            <person name="Detter J.C."/>
            <person name="Glavina T."/>
            <person name="Hammon N."/>
            <person name="Israni S."/>
            <person name="Pitluck S."/>
            <person name="Chertkov O."/>
            <person name="Schmutz J."/>
            <person name="Larimer F."/>
            <person name="Land M."/>
            <person name="Kyrpides N."/>
            <person name="Ivanova N."/>
            <person name="Richardson P."/>
        </authorList>
    </citation>
    <scope>NUCLEOTIDE SEQUENCE [LARGE SCALE GENOMIC DNA]</scope>
    <source>
        <strain>DSM 2380 / NBRC 103641 / GraBd1</strain>
    </source>
</reference>
<comment type="function">
    <text evidence="1">Catalyzes the folate-dependent formation of 5-methyl-uridine at position 54 (M-5-U54) in all tRNAs.</text>
</comment>
<comment type="catalytic activity">
    <reaction evidence="1">
        <text>uridine(54) in tRNA + (6R)-5,10-methylene-5,6,7,8-tetrahydrofolate + NADH + H(+) = 5-methyluridine(54) in tRNA + (6S)-5,6,7,8-tetrahydrofolate + NAD(+)</text>
        <dbReference type="Rhea" id="RHEA:16873"/>
        <dbReference type="Rhea" id="RHEA-COMP:10167"/>
        <dbReference type="Rhea" id="RHEA-COMP:10193"/>
        <dbReference type="ChEBI" id="CHEBI:15378"/>
        <dbReference type="ChEBI" id="CHEBI:15636"/>
        <dbReference type="ChEBI" id="CHEBI:57453"/>
        <dbReference type="ChEBI" id="CHEBI:57540"/>
        <dbReference type="ChEBI" id="CHEBI:57945"/>
        <dbReference type="ChEBI" id="CHEBI:65315"/>
        <dbReference type="ChEBI" id="CHEBI:74447"/>
        <dbReference type="EC" id="2.1.1.74"/>
    </reaction>
</comment>
<comment type="catalytic activity">
    <reaction evidence="1">
        <text>uridine(54) in tRNA + (6R)-5,10-methylene-5,6,7,8-tetrahydrofolate + NADPH + H(+) = 5-methyluridine(54) in tRNA + (6S)-5,6,7,8-tetrahydrofolate + NADP(+)</text>
        <dbReference type="Rhea" id="RHEA:62372"/>
        <dbReference type="Rhea" id="RHEA-COMP:10167"/>
        <dbReference type="Rhea" id="RHEA-COMP:10193"/>
        <dbReference type="ChEBI" id="CHEBI:15378"/>
        <dbReference type="ChEBI" id="CHEBI:15636"/>
        <dbReference type="ChEBI" id="CHEBI:57453"/>
        <dbReference type="ChEBI" id="CHEBI:57783"/>
        <dbReference type="ChEBI" id="CHEBI:58349"/>
        <dbReference type="ChEBI" id="CHEBI:65315"/>
        <dbReference type="ChEBI" id="CHEBI:74447"/>
        <dbReference type="EC" id="2.1.1.74"/>
    </reaction>
</comment>
<comment type="cofactor">
    <cofactor evidence="1">
        <name>FAD</name>
        <dbReference type="ChEBI" id="CHEBI:57692"/>
    </cofactor>
</comment>
<comment type="subcellular location">
    <subcellularLocation>
        <location evidence="1">Cytoplasm</location>
    </subcellularLocation>
</comment>
<comment type="similarity">
    <text evidence="1">Belongs to the MnmG family. TrmFO subfamily.</text>
</comment>
<protein>
    <recommendedName>
        <fullName evidence="1">Methylenetetrahydrofolate--tRNA-(uracil-5-)-methyltransferase TrmFO</fullName>
        <ecNumber evidence="1">2.1.1.74</ecNumber>
    </recommendedName>
    <alternativeName>
        <fullName evidence="1">Folate-dependent tRNA (uracil-5-)-methyltransferase</fullName>
    </alternativeName>
    <alternativeName>
        <fullName evidence="1">Folate-dependent tRNA(M-5-U54)-methyltransferase</fullName>
    </alternativeName>
</protein>
<sequence length="459" mass="50314">MNPTHSQQPHLTIIGAGLAGCEAAWQAAALGVQVTLHEMKPTSFSPAHQSADLAELVCSNSLRGAGMNNAVGCLKEELRRCATLFMQAADATAVPAGGALAVDRDAFSRYITEHIEQHPLITLQRNEQCSVPPEGTVIIASGPLTSDALAPHLAQLTGSRHLYFYDAIAPIIEADSIDFSIAWKASRYGRGGDDYINCPMSRDEYMTFVEALKTADKVAGKDFEKVIHFEGCMPIEEMARRGDMTLAFGPMKPVGLPDPRTGKDPFAVVQLRQDNLHATLFNMVGFQTKLTYPEQRRIFRTIPGLQDARFARLGSMHRNTFINAPRCLDQHLRLTSDPRMFFAGQITGVEGYVESAACGFLAGLFAAGQLTDHAVPLPPATTGLGALLGHLSHSSPDDFQPMNVNYGLFPPLEGRKRKRSERRLAMAERALRDLEPWRQRVLSHIPDLKPFPAEDSDDV</sequence>
<name>TRMFO_SYNC1</name>
<feature type="chain" id="PRO_0000346371" description="Methylenetetrahydrofolate--tRNA-(uracil-5-)-methyltransferase TrmFO">
    <location>
        <begin position="1"/>
        <end position="459"/>
    </location>
</feature>
<feature type="binding site" evidence="1">
    <location>
        <begin position="15"/>
        <end position="20"/>
    </location>
    <ligand>
        <name>FAD</name>
        <dbReference type="ChEBI" id="CHEBI:57692"/>
    </ligand>
</feature>
<keyword id="KW-0963">Cytoplasm</keyword>
<keyword id="KW-0274">FAD</keyword>
<keyword id="KW-0285">Flavoprotein</keyword>
<keyword id="KW-0489">Methyltransferase</keyword>
<keyword id="KW-0520">NAD</keyword>
<keyword id="KW-0521">NADP</keyword>
<keyword id="KW-1185">Reference proteome</keyword>
<keyword id="KW-0808">Transferase</keyword>
<keyword id="KW-0819">tRNA processing</keyword>
<accession>Q3A7H9</accession>
<gene>
    <name evidence="1" type="primary">trmFO</name>
    <name type="ordered locus">Pcar_0405</name>
</gene>
<evidence type="ECO:0000255" key="1">
    <source>
        <dbReference type="HAMAP-Rule" id="MF_01037"/>
    </source>
</evidence>
<dbReference type="EC" id="2.1.1.74" evidence="1"/>
<dbReference type="EMBL" id="CP000142">
    <property type="protein sequence ID" value="ABA87665.1"/>
    <property type="molecule type" value="Genomic_DNA"/>
</dbReference>
<dbReference type="RefSeq" id="WP_011340087.1">
    <property type="nucleotide sequence ID" value="NC_007498.2"/>
</dbReference>
<dbReference type="SMR" id="Q3A7H9"/>
<dbReference type="STRING" id="338963.Pcar_0405"/>
<dbReference type="KEGG" id="pca:Pcar_0405"/>
<dbReference type="eggNOG" id="COG1206">
    <property type="taxonomic scope" value="Bacteria"/>
</dbReference>
<dbReference type="HOGENOM" id="CLU_033057_1_0_7"/>
<dbReference type="OrthoDB" id="9803114at2"/>
<dbReference type="Proteomes" id="UP000002534">
    <property type="component" value="Chromosome"/>
</dbReference>
<dbReference type="GO" id="GO:0005829">
    <property type="term" value="C:cytosol"/>
    <property type="evidence" value="ECO:0007669"/>
    <property type="project" value="TreeGrafter"/>
</dbReference>
<dbReference type="GO" id="GO:0050660">
    <property type="term" value="F:flavin adenine dinucleotide binding"/>
    <property type="evidence" value="ECO:0007669"/>
    <property type="project" value="UniProtKB-UniRule"/>
</dbReference>
<dbReference type="GO" id="GO:0047151">
    <property type="term" value="F:tRNA (uracil(54)-C5)-methyltransferase activity, 5,10-methylenetetrahydrofolate-dependent"/>
    <property type="evidence" value="ECO:0007669"/>
    <property type="project" value="UniProtKB-UniRule"/>
</dbReference>
<dbReference type="GO" id="GO:0030488">
    <property type="term" value="P:tRNA methylation"/>
    <property type="evidence" value="ECO:0007669"/>
    <property type="project" value="TreeGrafter"/>
</dbReference>
<dbReference type="GO" id="GO:0002098">
    <property type="term" value="P:tRNA wobble uridine modification"/>
    <property type="evidence" value="ECO:0007669"/>
    <property type="project" value="TreeGrafter"/>
</dbReference>
<dbReference type="Gene3D" id="3.50.50.60">
    <property type="entry name" value="FAD/NAD(P)-binding domain"/>
    <property type="match status" value="2"/>
</dbReference>
<dbReference type="HAMAP" id="MF_01037">
    <property type="entry name" value="TrmFO"/>
    <property type="match status" value="1"/>
</dbReference>
<dbReference type="InterPro" id="IPR036188">
    <property type="entry name" value="FAD/NAD-bd_sf"/>
</dbReference>
<dbReference type="InterPro" id="IPR002218">
    <property type="entry name" value="MnmG-rel"/>
</dbReference>
<dbReference type="InterPro" id="IPR040131">
    <property type="entry name" value="MnmG_N"/>
</dbReference>
<dbReference type="InterPro" id="IPR004417">
    <property type="entry name" value="TrmFO"/>
</dbReference>
<dbReference type="NCBIfam" id="TIGR00137">
    <property type="entry name" value="gid_trmFO"/>
    <property type="match status" value="1"/>
</dbReference>
<dbReference type="NCBIfam" id="NF003739">
    <property type="entry name" value="PRK05335.1"/>
    <property type="match status" value="1"/>
</dbReference>
<dbReference type="PANTHER" id="PTHR11806">
    <property type="entry name" value="GLUCOSE INHIBITED DIVISION PROTEIN A"/>
    <property type="match status" value="1"/>
</dbReference>
<dbReference type="PANTHER" id="PTHR11806:SF2">
    <property type="entry name" value="METHYLENETETRAHYDROFOLATE--TRNA-(URACIL-5-)-METHYLTRANSFERASE TRMFO"/>
    <property type="match status" value="1"/>
</dbReference>
<dbReference type="Pfam" id="PF01134">
    <property type="entry name" value="GIDA"/>
    <property type="match status" value="1"/>
</dbReference>
<dbReference type="SUPFAM" id="SSF51905">
    <property type="entry name" value="FAD/NAD(P)-binding domain"/>
    <property type="match status" value="1"/>
</dbReference>